<accession>P0DPB3</accession>
<accession>B3KRM0</accession>
<accession>O75543</accession>
<accession>Q00P30</accession>
<accession>Q00P31</accession>
<accession>Q7Z3Y3</accession>
<accession>Q8IY83</accession>
<accession>Q9P0W3</accession>
<accession>Q9P0W4</accession>
<accession>Q9P0W5</accession>
<proteinExistence type="evidence at protein level"/>
<feature type="chain" id="PRO_0000288927" description="Schwannomin-interacting protein 1">
    <location>
        <begin position="1"/>
        <end position="487"/>
    </location>
</feature>
<feature type="region of interest" description="Disordered" evidence="2">
    <location>
        <begin position="1"/>
        <end position="74"/>
    </location>
</feature>
<feature type="region of interest" description="Disordered" evidence="2">
    <location>
        <begin position="88"/>
        <end position="221"/>
    </location>
</feature>
<feature type="region of interest" description="Disordered" evidence="2">
    <location>
        <begin position="236"/>
        <end position="260"/>
    </location>
</feature>
<feature type="region of interest" description="Disordered" evidence="2">
    <location>
        <begin position="308"/>
        <end position="354"/>
    </location>
</feature>
<feature type="coiled-coil region" evidence="1">
    <location>
        <begin position="424"/>
        <end position="458"/>
    </location>
</feature>
<feature type="compositionally biased region" description="Basic and acidic residues" evidence="2">
    <location>
        <begin position="14"/>
        <end position="27"/>
    </location>
</feature>
<feature type="compositionally biased region" description="Low complexity" evidence="2">
    <location>
        <begin position="32"/>
        <end position="67"/>
    </location>
</feature>
<feature type="compositionally biased region" description="Acidic residues" evidence="2">
    <location>
        <begin position="92"/>
        <end position="106"/>
    </location>
</feature>
<feature type="compositionally biased region" description="Basic and acidic residues" evidence="2">
    <location>
        <begin position="107"/>
        <end position="123"/>
    </location>
</feature>
<feature type="compositionally biased region" description="Basic and acidic residues" evidence="2">
    <location>
        <begin position="153"/>
        <end position="162"/>
    </location>
</feature>
<feature type="compositionally biased region" description="Polar residues" evidence="2">
    <location>
        <begin position="242"/>
        <end position="255"/>
    </location>
</feature>
<feature type="compositionally biased region" description="Basic and acidic residues" evidence="2">
    <location>
        <begin position="309"/>
        <end position="323"/>
    </location>
</feature>
<feature type="compositionally biased region" description="Polar residues" evidence="2">
    <location>
        <begin position="324"/>
        <end position="335"/>
    </location>
</feature>
<feature type="compositionally biased region" description="Acidic residues" evidence="2">
    <location>
        <begin position="344"/>
        <end position="354"/>
    </location>
</feature>
<feature type="modified residue" description="Phosphoserine" evidence="13">
    <location>
        <position position="117"/>
    </location>
</feature>
<feature type="splice variant" id="VSP_025827" description="In isoform SCHIP1-4." evidence="7 8">
    <location>
        <begin position="1"/>
        <end position="243"/>
    </location>
</feature>
<feature type="splice variant" id="VSP_025828" description="In isoform SCHIP1-3." evidence="6">
    <location>
        <begin position="22"/>
        <end position="253"/>
    </location>
</feature>
<feature type="splice variant" id="VSP_025829" description="In isoform SCHIP1-2." evidence="6">
    <location>
        <begin position="241"/>
        <end position="253"/>
    </location>
</feature>
<feature type="splice variant" id="VSP_025830" description="In isoform SCHIP1-4." evidence="7 8">
    <original>QGQARTNSTS</original>
    <variation>MVHQDNCSYQ</variation>
    <location>
        <begin position="244"/>
        <end position="253"/>
    </location>
</feature>
<feature type="sequence variant" id="VAR_051332" description="In dbSNP:rs3732851.">
    <original>E</original>
    <variation>K</variation>
    <location>
        <position position="101"/>
    </location>
</feature>
<feature type="sequence variant" id="VAR_032534" description="In dbSNP:rs17850021." evidence="4">
    <original>A</original>
    <variation>V</variation>
    <location>
        <position position="481"/>
    </location>
</feature>
<feature type="sequence conflict" description="In Ref. 4; AAH36535." evidence="10" ref="4">
    <location>
        <position position="178"/>
    </location>
</feature>
<protein>
    <recommendedName>
        <fullName evidence="12">Schwannomin-interacting protein 1</fullName>
        <shortName evidence="6">SCHIP-1</shortName>
    </recommendedName>
</protein>
<name>SCHI1_HUMAN</name>
<sequence length="487" mass="53480">MERSGQRVTTWDCDQGKHSDSDYREDGMDLGSDAGSSSSSSRASSQSNSTKVTPCSECKSSSSPGGSLDLVSALEDYEEPFPVYQKKVIDEWAPEEDGEEEEEEDERDQRGYRDDRSPAREPGDVSARTRSGGGGGRSATTAMPPPVPNGNLHQHDPQDLRHNGNVVVAGRPSCSRGPRRAIQKPQPAGGRRSGRGPAAGGLCLQPPDGGTCVPEEPPVPPMDWEALEKHLAGLQFREQEVRNQGQARTNSTSAQKNERESIRQKLALGSFFDDGPGIYTSCSKSGKPSLSSRLQSGMNLQICFVNDSGSDKDSDADDSKTETSLDTPLSPMSKQSSSYSDRDTTEEESESLDDMDFLTRQKKLQAEAKMALAMAKPMAKMQVEVEKQNRKKSPVADLLPHMPHISECLMKRSLKPTDLRDMTIGQLQVIVNDLHSQIESLNEELVQLLLIRDELHTEQDAMLVDIEDLTRHAESQQKHMAEKMPAK</sequence>
<reference evidence="11" key="1">
    <citation type="journal article" date="2000" name="Mol. Cell. Biol.">
        <title>Cloning and characterization of SCHIP-1, a novel protein interacting specifically with spliced isoforms and naturally occurring mutant NF2 proteins.</title>
        <authorList>
            <person name="Goutebroze L."/>
            <person name="Brault E."/>
            <person name="Muchardt C."/>
            <person name="Camonis J."/>
            <person name="Thomas G."/>
        </authorList>
    </citation>
    <scope>NUCLEOTIDE SEQUENCE [MRNA] (ISOFORMS SCHIP1-1; SCHIP1-2 AND SCHIP1-3)</scope>
    <scope>INTERACTION WITH NF2</scope>
    <scope>SUBUNIT</scope>
    <scope>SUBCELLULAR LOCATION</scope>
    <scope>TISSUE SPECIFICITY</scope>
    <source>
        <tissue>Brain</tissue>
    </source>
</reference>
<reference key="2">
    <citation type="journal article" date="2004" name="Nat. Genet.">
        <title>Complete sequencing and characterization of 21,243 full-length human cDNAs.</title>
        <authorList>
            <person name="Ota T."/>
            <person name="Suzuki Y."/>
            <person name="Nishikawa T."/>
            <person name="Otsuki T."/>
            <person name="Sugiyama T."/>
            <person name="Irie R."/>
            <person name="Wakamatsu A."/>
            <person name="Hayashi K."/>
            <person name="Sato H."/>
            <person name="Nagai K."/>
            <person name="Kimura K."/>
            <person name="Makita H."/>
            <person name="Sekine M."/>
            <person name="Obayashi M."/>
            <person name="Nishi T."/>
            <person name="Shibahara T."/>
            <person name="Tanaka T."/>
            <person name="Ishii S."/>
            <person name="Yamamoto J."/>
            <person name="Saito K."/>
            <person name="Kawai Y."/>
            <person name="Isono Y."/>
            <person name="Nakamura Y."/>
            <person name="Nagahari K."/>
            <person name="Murakami K."/>
            <person name="Yasuda T."/>
            <person name="Iwayanagi T."/>
            <person name="Wagatsuma M."/>
            <person name="Shiratori A."/>
            <person name="Sudo H."/>
            <person name="Hosoiri T."/>
            <person name="Kaku Y."/>
            <person name="Kodaira H."/>
            <person name="Kondo H."/>
            <person name="Sugawara M."/>
            <person name="Takahashi M."/>
            <person name="Kanda K."/>
            <person name="Yokoi T."/>
            <person name="Furuya T."/>
            <person name="Kikkawa E."/>
            <person name="Omura Y."/>
            <person name="Abe K."/>
            <person name="Kamihara K."/>
            <person name="Katsuta N."/>
            <person name="Sato K."/>
            <person name="Tanikawa M."/>
            <person name="Yamazaki M."/>
            <person name="Ninomiya K."/>
            <person name="Ishibashi T."/>
            <person name="Yamashita H."/>
            <person name="Murakawa K."/>
            <person name="Fujimori K."/>
            <person name="Tanai H."/>
            <person name="Kimata M."/>
            <person name="Watanabe M."/>
            <person name="Hiraoka S."/>
            <person name="Chiba Y."/>
            <person name="Ishida S."/>
            <person name="Ono Y."/>
            <person name="Takiguchi S."/>
            <person name="Watanabe S."/>
            <person name="Yosida M."/>
            <person name="Hotuta T."/>
            <person name="Kusano J."/>
            <person name="Kanehori K."/>
            <person name="Takahashi-Fujii A."/>
            <person name="Hara H."/>
            <person name="Tanase T.-O."/>
            <person name="Nomura Y."/>
            <person name="Togiya S."/>
            <person name="Komai F."/>
            <person name="Hara R."/>
            <person name="Takeuchi K."/>
            <person name="Arita M."/>
            <person name="Imose N."/>
            <person name="Musashino K."/>
            <person name="Yuuki H."/>
            <person name="Oshima A."/>
            <person name="Sasaki N."/>
            <person name="Aotsuka S."/>
            <person name="Yoshikawa Y."/>
            <person name="Matsunawa H."/>
            <person name="Ichihara T."/>
            <person name="Shiohata N."/>
            <person name="Sano S."/>
            <person name="Moriya S."/>
            <person name="Momiyama H."/>
            <person name="Satoh N."/>
            <person name="Takami S."/>
            <person name="Terashima Y."/>
            <person name="Suzuki O."/>
            <person name="Nakagawa S."/>
            <person name="Senoh A."/>
            <person name="Mizoguchi H."/>
            <person name="Goto Y."/>
            <person name="Shimizu F."/>
            <person name="Wakebe H."/>
            <person name="Hishigaki H."/>
            <person name="Watanabe T."/>
            <person name="Sugiyama A."/>
            <person name="Takemoto M."/>
            <person name="Kawakami B."/>
            <person name="Yamazaki M."/>
            <person name="Watanabe K."/>
            <person name="Kumagai A."/>
            <person name="Itakura S."/>
            <person name="Fukuzumi Y."/>
            <person name="Fujimori Y."/>
            <person name="Komiyama M."/>
            <person name="Tashiro H."/>
            <person name="Tanigami A."/>
            <person name="Fujiwara T."/>
            <person name="Ono T."/>
            <person name="Yamada K."/>
            <person name="Fujii Y."/>
            <person name="Ozaki K."/>
            <person name="Hirao M."/>
            <person name="Ohmori Y."/>
            <person name="Kawabata A."/>
            <person name="Hikiji T."/>
            <person name="Kobatake N."/>
            <person name="Inagaki H."/>
            <person name="Ikema Y."/>
            <person name="Okamoto S."/>
            <person name="Okitani R."/>
            <person name="Kawakami T."/>
            <person name="Noguchi S."/>
            <person name="Itoh T."/>
            <person name="Shigeta K."/>
            <person name="Senba T."/>
            <person name="Matsumura K."/>
            <person name="Nakajima Y."/>
            <person name="Mizuno T."/>
            <person name="Morinaga M."/>
            <person name="Sasaki M."/>
            <person name="Togashi T."/>
            <person name="Oyama M."/>
            <person name="Hata H."/>
            <person name="Watanabe M."/>
            <person name="Komatsu T."/>
            <person name="Mizushima-Sugano J."/>
            <person name="Satoh T."/>
            <person name="Shirai Y."/>
            <person name="Takahashi Y."/>
            <person name="Nakagawa K."/>
            <person name="Okumura K."/>
            <person name="Nagase T."/>
            <person name="Nomura N."/>
            <person name="Kikuchi H."/>
            <person name="Masuho Y."/>
            <person name="Yamashita R."/>
            <person name="Nakai K."/>
            <person name="Yada T."/>
            <person name="Nakamura Y."/>
            <person name="Ohara O."/>
            <person name="Isogai T."/>
            <person name="Sugano S."/>
        </authorList>
    </citation>
    <scope>NUCLEOTIDE SEQUENCE [LARGE SCALE MRNA] (ISOFORM SCHIP1-4)</scope>
</reference>
<reference key="3">
    <citation type="submission" date="2005-09" db="EMBL/GenBank/DDBJ databases">
        <authorList>
            <person name="Mural R.J."/>
            <person name="Istrail S."/>
            <person name="Sutton G.G."/>
            <person name="Florea L."/>
            <person name="Halpern A.L."/>
            <person name="Mobarry C.M."/>
            <person name="Lippert R."/>
            <person name="Walenz B."/>
            <person name="Shatkay H."/>
            <person name="Dew I."/>
            <person name="Miller J.R."/>
            <person name="Flanigan M.J."/>
            <person name="Edwards N.J."/>
            <person name="Bolanos R."/>
            <person name="Fasulo D."/>
            <person name="Halldorsson B.V."/>
            <person name="Hannenhalli S."/>
            <person name="Turner R."/>
            <person name="Yooseph S."/>
            <person name="Lu F."/>
            <person name="Nusskern D.R."/>
            <person name="Shue B.C."/>
            <person name="Zheng X.H."/>
            <person name="Zhong F."/>
            <person name="Delcher A.L."/>
            <person name="Huson D.H."/>
            <person name="Kravitz S.A."/>
            <person name="Mouchard L."/>
            <person name="Reinert K."/>
            <person name="Remington K.A."/>
            <person name="Clark A.G."/>
            <person name="Waterman M.S."/>
            <person name="Eichler E.E."/>
            <person name="Adams M.D."/>
            <person name="Hunkapiller M.W."/>
            <person name="Myers E.W."/>
            <person name="Venter J.C."/>
        </authorList>
    </citation>
    <scope>NUCLEOTIDE SEQUENCE [LARGE SCALE GENOMIC DNA]</scope>
</reference>
<reference key="4">
    <citation type="journal article" date="2004" name="Genome Res.">
        <title>The status, quality, and expansion of the NIH full-length cDNA project: the Mammalian Gene Collection (MGC).</title>
        <authorList>
            <consortium name="The MGC Project Team"/>
        </authorList>
    </citation>
    <scope>NUCLEOTIDE SEQUENCE [LARGE SCALE MRNA] (ISOFORMS SCHIP1-1 AND SCHIP1-4)</scope>
    <scope>VARIANT VAL-481</scope>
    <source>
        <tissue>Skeletal muscle</tissue>
    </source>
</reference>
<reference key="5">
    <citation type="submission" date="1998-06" db="EMBL/GenBank/DDBJ databases">
        <authorList>
            <person name="Yu W."/>
            <person name="Gibbs R.A."/>
        </authorList>
    </citation>
    <scope>NUCLEOTIDE SEQUENCE [LARGE SCALE MRNA] OF 107-487 (ISOFORM SCHIP1-1)</scope>
    <source>
        <tissue>Brain</tissue>
    </source>
</reference>
<reference key="6">
    <citation type="journal article" date="2006" name="Biochem. Biophys. Res. Commun.">
        <title>IQCJ-SCHIP1, a novel fusion transcript encoding a calmodulin-binding IQ motif protein.</title>
        <authorList>
            <person name="Kwasnicka-Crawford D.A."/>
            <person name="Carson A.R."/>
            <person name="Scherer S.W."/>
        </authorList>
    </citation>
    <scope>ALTERNATIVE SPLICING</scope>
</reference>
<reference key="7">
    <citation type="journal article" date="2013" name="J. Proteome Res.">
        <title>Toward a comprehensive characterization of a human cancer cell phosphoproteome.</title>
        <authorList>
            <person name="Zhou H."/>
            <person name="Di Palma S."/>
            <person name="Preisinger C."/>
            <person name="Peng M."/>
            <person name="Polat A.N."/>
            <person name="Heck A.J."/>
            <person name="Mohammed S."/>
        </authorList>
    </citation>
    <scope>PHOSPHORYLATION [LARGE SCALE ANALYSIS] AT SER-117</scope>
    <scope>IDENTIFICATION BY MASS SPECTROMETRY [LARGE SCALE ANALYSIS]</scope>
    <source>
        <tissue>Cervix carcinoma</tissue>
    </source>
</reference>
<reference key="8">
    <citation type="journal article" date="2015" name="J. Neurochem.">
        <title>CK2-regulated schwannomin-interacting protein IQCJ-SCHIP-1 association with AnkG contributes to the maintenance of the axon initial segment.</title>
        <authorList>
            <person name="Papandreou M.J."/>
            <person name="Vacher H."/>
            <person name="Fache M.P."/>
            <person name="Klingler E."/>
            <person name="Rueda-Boroni F."/>
            <person name="Ferracci G."/>
            <person name="Debarnot C."/>
            <person name="Piperoglou C."/>
            <person name="Garcia Del Cano G."/>
            <person name="Goutebroze L."/>
            <person name="Dargent B."/>
        </authorList>
    </citation>
    <scope>INTERACTION WITH ANK3</scope>
</reference>
<gene>
    <name evidence="12" type="primary">SCHIP1</name>
</gene>
<keyword id="KW-0025">Alternative splicing</keyword>
<keyword id="KW-0175">Coiled coil</keyword>
<keyword id="KW-0963">Cytoplasm</keyword>
<keyword id="KW-0597">Phosphoprotein</keyword>
<keyword id="KW-1185">Reference proteome</keyword>
<dbReference type="EMBL" id="AF145713">
    <property type="protein sequence ID" value="AAF34241.1"/>
    <property type="molecule type" value="mRNA"/>
</dbReference>
<dbReference type="EMBL" id="AF145714">
    <property type="protein sequence ID" value="AAF34242.1"/>
    <property type="molecule type" value="mRNA"/>
</dbReference>
<dbReference type="EMBL" id="AF145715">
    <property type="protein sequence ID" value="AAF34243.1"/>
    <property type="molecule type" value="mRNA"/>
</dbReference>
<dbReference type="EMBL" id="AK091871">
    <property type="protein sequence ID" value="BAG52432.1"/>
    <property type="molecule type" value="mRNA"/>
</dbReference>
<dbReference type="EMBL" id="CH471052">
    <property type="protein sequence ID" value="EAW78662.1"/>
    <property type="molecule type" value="Genomic_DNA"/>
</dbReference>
<dbReference type="EMBL" id="BC005947">
    <property type="protein sequence ID" value="AAH05947.1"/>
    <property type="molecule type" value="mRNA"/>
</dbReference>
<dbReference type="EMBL" id="BC036535">
    <property type="protein sequence ID" value="AAH36535.1"/>
    <property type="molecule type" value="mRNA"/>
</dbReference>
<dbReference type="EMBL" id="AF070614">
    <property type="protein sequence ID" value="AAC25386.1"/>
    <property type="molecule type" value="mRNA"/>
</dbReference>
<dbReference type="CCDS" id="CCDS3186.1"/>
<dbReference type="CCDS" id="CCDS56292.1">
    <molecule id="P0DPB3-2"/>
</dbReference>
<dbReference type="CCDS" id="CCDS56293.1">
    <molecule id="P0DPB3-3"/>
</dbReference>
<dbReference type="CCDS" id="CCDS56294.1">
    <molecule id="P0DPB3-4"/>
</dbReference>
<dbReference type="RefSeq" id="NP_001184036.1">
    <molecule id="P0DPB3-2"/>
    <property type="nucleotide sequence ID" value="NM_001197107.2"/>
</dbReference>
<dbReference type="RefSeq" id="NP_001184037.1">
    <molecule id="P0DPB3-3"/>
    <property type="nucleotide sequence ID" value="NM_001197108.2"/>
</dbReference>
<dbReference type="RefSeq" id="NP_001184038.1">
    <molecule id="P0DPB3-4"/>
    <property type="nucleotide sequence ID" value="NM_001197109.2"/>
</dbReference>
<dbReference type="RefSeq" id="NP_055390.1">
    <molecule id="P0DPB3-1"/>
    <property type="nucleotide sequence ID" value="NM_014575.4"/>
</dbReference>
<dbReference type="SMR" id="P0DPB3"/>
<dbReference type="CORUM" id="P0DPB3"/>
<dbReference type="FunCoup" id="P0DPB3">
    <property type="interactions" value="308"/>
</dbReference>
<dbReference type="IntAct" id="P0DPB3">
    <property type="interactions" value="70"/>
</dbReference>
<dbReference type="iPTMnet" id="P0DPB3"/>
<dbReference type="PhosphoSitePlus" id="P0DPB3"/>
<dbReference type="BioMuta" id="SCHIP1"/>
<dbReference type="jPOST" id="P0DPB3"/>
<dbReference type="MassIVE" id="P0DPB3"/>
<dbReference type="PeptideAtlas" id="P0DPB3"/>
<dbReference type="Pumba" id="P0DPB3"/>
<dbReference type="Antibodypedia" id="1013">
    <property type="antibodies" value="111 antibodies from 16 providers"/>
</dbReference>
<dbReference type="DNASU" id="29970"/>
<dbReference type="Ensembl" id="ENST00000412423.8">
    <molecule id="P0DPB3-2"/>
    <property type="protein sequence ID" value="ENSP00000400942.2"/>
    <property type="gene ID" value="ENSG00000151967.19"/>
</dbReference>
<dbReference type="Ensembl" id="ENST00000445224.6">
    <molecule id="P0DPB3-4"/>
    <property type="protein sequence ID" value="ENSP00000404860.2"/>
    <property type="gene ID" value="ENSG00000151967.19"/>
</dbReference>
<dbReference type="Ensembl" id="ENST00000527095.7">
    <molecule id="P0DPB3-3"/>
    <property type="protein sequence ID" value="ENSP00000436076.1"/>
    <property type="gene ID" value="ENSG00000151967.19"/>
</dbReference>
<dbReference type="Ensembl" id="ENST00000638749.2">
    <molecule id="P0DPB3-1"/>
    <property type="protein sequence ID" value="ENSP00000491030.1"/>
    <property type="gene ID" value="ENSG00000151967.19"/>
</dbReference>
<dbReference type="GeneID" id="29970"/>
<dbReference type="KEGG" id="hsa:29970"/>
<dbReference type="MANE-Select" id="ENST00000638749.2">
    <property type="protein sequence ID" value="ENSP00000491030.1"/>
    <property type="RefSeq nucleotide sequence ID" value="NM_014575.4"/>
    <property type="RefSeq protein sequence ID" value="NP_055390.1"/>
</dbReference>
<dbReference type="AGR" id="HGNC:15678"/>
<dbReference type="CTD" id="29970"/>
<dbReference type="DisGeNET" id="29970"/>
<dbReference type="GeneCards" id="SCHIP1"/>
<dbReference type="HGNC" id="HGNC:15678">
    <property type="gene designation" value="SCHIP1"/>
</dbReference>
<dbReference type="HPA" id="ENSG00000151967">
    <property type="expression patterns" value="Group enriched (brain, heart muscle, skeletal muscle, tongue)"/>
</dbReference>
<dbReference type="MIM" id="619206">
    <property type="type" value="gene"/>
</dbReference>
<dbReference type="neXtProt" id="NX_P0DPB3"/>
<dbReference type="OpenTargets" id="ENSG00000151967"/>
<dbReference type="VEuPathDB" id="HostDB:ENSG00000151967"/>
<dbReference type="GeneTree" id="ENSGT00390000011127"/>
<dbReference type="InParanoid" id="P0DPB3"/>
<dbReference type="OrthoDB" id="6260144at2759"/>
<dbReference type="PAN-GO" id="P0DPB3">
    <property type="GO annotations" value="3 GO annotations based on evolutionary models"/>
</dbReference>
<dbReference type="PathwayCommons" id="P0DPB3"/>
<dbReference type="SignaLink" id="P0DPB3"/>
<dbReference type="Pharos" id="P0DPB3">
    <property type="development level" value="Tbio"/>
</dbReference>
<dbReference type="PRO" id="PR:P0DPB3"/>
<dbReference type="Proteomes" id="UP000005640">
    <property type="component" value="Chromosome 3"/>
</dbReference>
<dbReference type="Bgee" id="ENSG00000151967">
    <property type="expression patterns" value="Expressed in ventricular zone and 106 other cell types or tissues"/>
</dbReference>
<dbReference type="ExpressionAtlas" id="P0DPB3">
    <property type="expression patterns" value="baseline and differential"/>
</dbReference>
<dbReference type="GO" id="GO:0030054">
    <property type="term" value="C:cell junction"/>
    <property type="evidence" value="ECO:0000318"/>
    <property type="project" value="GO_Central"/>
</dbReference>
<dbReference type="GO" id="GO:0005737">
    <property type="term" value="C:cytoplasm"/>
    <property type="evidence" value="ECO:0007669"/>
    <property type="project" value="UniProtKB-SubCell"/>
</dbReference>
<dbReference type="GO" id="GO:0005886">
    <property type="term" value="C:plasma membrane"/>
    <property type="evidence" value="ECO:0000318"/>
    <property type="project" value="GO_Central"/>
</dbReference>
<dbReference type="GO" id="GO:0042802">
    <property type="term" value="F:identical protein binding"/>
    <property type="evidence" value="ECO:0000353"/>
    <property type="project" value="IntAct"/>
</dbReference>
<dbReference type="GO" id="GO:0035332">
    <property type="term" value="P:positive regulation of hippo signaling"/>
    <property type="evidence" value="ECO:0000318"/>
    <property type="project" value="GO_Central"/>
</dbReference>
<dbReference type="InterPro" id="IPR039045">
    <property type="entry name" value="SCHIP_1"/>
</dbReference>
<dbReference type="InterPro" id="IPR015649">
    <property type="entry name" value="SCHIP_1_C"/>
</dbReference>
<dbReference type="PANTHER" id="PTHR13103:SF2">
    <property type="entry name" value="IQCJ-SCHIP1 READTHROUGH TRANSCRIPT PROTEIN-RELATED"/>
    <property type="match status" value="1"/>
</dbReference>
<dbReference type="PANTHER" id="PTHR13103">
    <property type="entry name" value="SCHWANNOMIN INTERACTING PROTEIN 1"/>
    <property type="match status" value="1"/>
</dbReference>
<dbReference type="Pfam" id="PF10148">
    <property type="entry name" value="SCHIP-1_C"/>
    <property type="match status" value="1"/>
</dbReference>
<evidence type="ECO:0000255" key="1"/>
<evidence type="ECO:0000256" key="2">
    <source>
        <dbReference type="SAM" id="MobiDB-lite"/>
    </source>
</evidence>
<evidence type="ECO:0000269" key="3">
    <source>
    </source>
</evidence>
<evidence type="ECO:0000269" key="4">
    <source>
    </source>
</evidence>
<evidence type="ECO:0000269" key="5">
    <source>
    </source>
</evidence>
<evidence type="ECO:0000303" key="6">
    <source>
    </source>
</evidence>
<evidence type="ECO:0000303" key="7">
    <source>
    </source>
</evidence>
<evidence type="ECO:0000303" key="8">
    <source>
    </source>
</evidence>
<evidence type="ECO:0000303" key="9">
    <source>
    </source>
</evidence>
<evidence type="ECO:0000305" key="10"/>
<evidence type="ECO:0000312" key="11">
    <source>
        <dbReference type="EMBL" id="AAF34241.1"/>
    </source>
</evidence>
<evidence type="ECO:0000312" key="12">
    <source>
        <dbReference type="HGNC" id="HGNC:15678"/>
    </source>
</evidence>
<evidence type="ECO:0007744" key="13">
    <source>
    </source>
</evidence>
<organism>
    <name type="scientific">Homo sapiens</name>
    <name type="common">Human</name>
    <dbReference type="NCBI Taxonomy" id="9606"/>
    <lineage>
        <taxon>Eukaryota</taxon>
        <taxon>Metazoa</taxon>
        <taxon>Chordata</taxon>
        <taxon>Craniata</taxon>
        <taxon>Vertebrata</taxon>
        <taxon>Euteleostomi</taxon>
        <taxon>Mammalia</taxon>
        <taxon>Eutheria</taxon>
        <taxon>Euarchontoglires</taxon>
        <taxon>Primates</taxon>
        <taxon>Haplorrhini</taxon>
        <taxon>Catarrhini</taxon>
        <taxon>Hominidae</taxon>
        <taxon>Homo</taxon>
    </lineage>
</organism>
<comment type="subunit">
    <text evidence="3 5">Homooligomer (via coiled coil domain) (PubMed:10669747). Interacts with NF2; the interaction is direct (PubMed:10669747). Interacts with ANK3 (PubMed:25950943).</text>
</comment>
<comment type="interaction">
    <interactant intactId="EBI-1397509">
        <id>P0DPB3</id>
    </interactant>
    <interactant intactId="EBI-359318">
        <id>P55036</id>
        <label>PSMD4</label>
    </interactant>
    <organismsDiffer>false</organismsDiffer>
    <experiments>2</experiments>
</comment>
<comment type="interaction">
    <interactant intactId="EBI-1397509">
        <id>P0DPB3</id>
    </interactant>
    <interactant intactId="EBI-1397509">
        <id>P0DPB3</id>
        <label>SCHIP1</label>
    </interactant>
    <organismsDiffer>false</organismsDiffer>
    <experiments>2</experiments>
</comment>
<comment type="interaction">
    <interactant intactId="EBI-1397509">
        <id>P0DPB3</id>
    </interactant>
    <interactant intactId="EBI-2686537">
        <id>Q9UIL1</id>
        <label>SCOC</label>
    </interactant>
    <organismsDiffer>false</organismsDiffer>
    <experiments>6</experiments>
</comment>
<comment type="interaction">
    <interactant intactId="EBI-1397509">
        <id>P0DPB3</id>
    </interactant>
    <interactant intactId="EBI-2679720">
        <id>Q5T200</id>
        <label>ZC3H13</label>
    </interactant>
    <organismsDiffer>false</organismsDiffer>
    <experiments>2</experiments>
</comment>
<comment type="interaction">
    <interactant intactId="EBI-11962426">
        <id>P0DPB3-4</id>
    </interactant>
    <interactant intactId="EBI-2798416">
        <id>Q99633</id>
        <label>PRPF18</label>
    </interactant>
    <organismsDiffer>false</organismsDiffer>
    <experiments>3</experiments>
</comment>
<comment type="interaction">
    <interactant intactId="EBI-11962426">
        <id>P0DPB3-4</id>
    </interactant>
    <interactant intactId="EBI-10692913">
        <id>Q9UIL1-3</id>
        <label>SCOC</label>
    </interactant>
    <organismsDiffer>false</organismsDiffer>
    <experiments>5</experiments>
</comment>
<comment type="interaction">
    <interactant intactId="EBI-11962426">
        <id>P0DPB3-4</id>
    </interactant>
    <interactant intactId="EBI-358489">
        <id>Q96GM5</id>
        <label>SMARCD1</label>
    </interactant>
    <organismsDiffer>false</organismsDiffer>
    <experiments>3</experiments>
</comment>
<comment type="subcellular location">
    <subcellularLocation>
        <location evidence="3">Cytoplasm</location>
    </subcellularLocation>
</comment>
<comment type="alternative products">
    <event type="alternative splicing"/>
    <isoform>
        <id>P0DPB3-1</id>
        <id>Q9P0W5-1</id>
        <name>SCHIP1-1</name>
        <name evidence="6">SCHIP-1</name>
        <name evidence="9">SCHIP-1a</name>
        <sequence type="displayed"/>
    </isoform>
    <isoform>
        <id>P0DPB3-2</id>
        <id>Q9P0W5-2</id>
        <name>SCHIP1-2</name>
        <name evidence="6">SCHIP-1-D241/253</name>
        <sequence type="described" ref="VSP_025829"/>
    </isoform>
    <isoform>
        <id>P0DPB3-3</id>
        <id>Q9P0W5-3</id>
        <name>SCHIP1-3</name>
        <name evidence="6">SCHIP-1-D22/253</name>
        <sequence type="described" ref="VSP_025828"/>
    </isoform>
    <isoform>
        <id>P0DPB3-4</id>
        <id>Q9P0W5-4</id>
        <name>SCHIP1-4</name>
        <sequence type="described" ref="VSP_025827 VSP_025830"/>
    </isoform>
    <isoform>
        <id>B3KU38-1</id>
        <name>IQCJ-SCHIP1-1</name>
        <sequence type="external"/>
    </isoform>
    <isoform>
        <id>B3KU38-2</id>
        <name>IQCJ-SCHIP1-2</name>
        <sequence type="external"/>
    </isoform>
</comment>
<comment type="tissue specificity">
    <text evidence="3">Preferentially expressed in brain, skeletal muscles and heart. Also expressed in detected in pancreas, kidney, liver, lung, and placenta.</text>
</comment>
<comment type="similarity">
    <text evidence="10">Belongs to the SCHIP1 family.</text>
</comment>